<geneLocation type="chloroplast"/>
<gene>
    <name evidence="1" type="primary">carA</name>
</gene>
<keyword id="KW-0028">Amino-acid biosynthesis</keyword>
<keyword id="KW-0055">Arginine biosynthesis</keyword>
<keyword id="KW-0067">ATP-binding</keyword>
<keyword id="KW-0150">Chloroplast</keyword>
<keyword id="KW-0315">Glutamine amidotransferase</keyword>
<keyword id="KW-0436">Ligase</keyword>
<keyword id="KW-0547">Nucleotide-binding</keyword>
<keyword id="KW-0934">Plastid</keyword>
<keyword id="KW-0665">Pyrimidine biosynthesis</keyword>
<protein>
    <recommendedName>
        <fullName evidence="1">Carbamoyl phosphate synthase small chain</fullName>
        <ecNumber evidence="1">6.3.5.5</ecNumber>
    </recommendedName>
    <alternativeName>
        <fullName evidence="1">Carbamoyl phosphate synthetase glutamine chain</fullName>
    </alternativeName>
</protein>
<reference key="1">
    <citation type="journal article" date="1995" name="Plant Mol. Biol. Rep.">
        <title>Complete nucleotide sequence of the Porphyra purpurea chloroplast genome.</title>
        <authorList>
            <person name="Reith M.E."/>
            <person name="Munholland J."/>
        </authorList>
    </citation>
    <scope>NUCLEOTIDE SEQUENCE [LARGE SCALE GENOMIC DNA]</scope>
    <source>
        <strain>Avonport</strain>
    </source>
</reference>
<evidence type="ECO:0000255" key="1">
    <source>
        <dbReference type="HAMAP-Rule" id="MF_01209"/>
    </source>
</evidence>
<comment type="function">
    <text evidence="1">Small subunit of the glutamine-dependent carbamoyl phosphate synthetase (CPSase). CPSase catalyzes the formation of carbamoyl phosphate from the ammonia moiety of glutamine, carbonate, and phosphate donated by ATP, constituting the first step of 2 biosynthetic pathways, one leading to arginine and/or urea and the other to pyrimidine nucleotides. The small subunit (glutamine amidotransferase) binds and cleaves glutamine to supply the large subunit with the substrate ammonia.</text>
</comment>
<comment type="catalytic activity">
    <reaction evidence="1">
        <text>hydrogencarbonate + L-glutamine + 2 ATP + H2O = carbamoyl phosphate + L-glutamate + 2 ADP + phosphate + 2 H(+)</text>
        <dbReference type="Rhea" id="RHEA:18633"/>
        <dbReference type="ChEBI" id="CHEBI:15377"/>
        <dbReference type="ChEBI" id="CHEBI:15378"/>
        <dbReference type="ChEBI" id="CHEBI:17544"/>
        <dbReference type="ChEBI" id="CHEBI:29985"/>
        <dbReference type="ChEBI" id="CHEBI:30616"/>
        <dbReference type="ChEBI" id="CHEBI:43474"/>
        <dbReference type="ChEBI" id="CHEBI:58228"/>
        <dbReference type="ChEBI" id="CHEBI:58359"/>
        <dbReference type="ChEBI" id="CHEBI:456216"/>
        <dbReference type="EC" id="6.3.5.5"/>
    </reaction>
</comment>
<comment type="catalytic activity">
    <molecule>Carbamoyl phosphate synthase small chain</molecule>
    <reaction evidence="1">
        <text>L-glutamine + H2O = L-glutamate + NH4(+)</text>
        <dbReference type="Rhea" id="RHEA:15889"/>
        <dbReference type="ChEBI" id="CHEBI:15377"/>
        <dbReference type="ChEBI" id="CHEBI:28938"/>
        <dbReference type="ChEBI" id="CHEBI:29985"/>
        <dbReference type="ChEBI" id="CHEBI:58359"/>
    </reaction>
</comment>
<comment type="pathway">
    <text evidence="1">Amino-acid biosynthesis; L-arginine biosynthesis; carbamoyl phosphate from bicarbonate: step 1/1.</text>
</comment>
<comment type="pathway">
    <text evidence="1">Pyrimidine metabolism; UMP biosynthesis via de novo pathway; (S)-dihydroorotate from bicarbonate: step 1/3.</text>
</comment>
<comment type="subunit">
    <text evidence="1">Composed of two chains; the small (or glutamine) chain promotes the hydrolysis of glutamine to ammonia, which is used by the large (or ammonia) chain to synthesize carbamoyl phosphate. Tetramer of heterodimers (alpha,beta)4.</text>
</comment>
<comment type="subcellular location">
    <subcellularLocation>
        <location evidence="1">Plastid</location>
        <location evidence="1">Chloroplast</location>
    </subcellularLocation>
</comment>
<comment type="similarity">
    <text evidence="1">Belongs to the CarA family.</text>
</comment>
<name>CARA_PORPU</name>
<feature type="chain" id="PRO_0000112371" description="Carbamoyl phosphate synthase small chain">
    <location>
        <begin position="1"/>
        <end position="384"/>
    </location>
</feature>
<feature type="domain" description="Glutamine amidotransferase type-1" evidence="1">
    <location>
        <begin position="196"/>
        <end position="382"/>
    </location>
</feature>
<feature type="region of interest" description="CPSase" evidence="1">
    <location>
        <begin position="1"/>
        <end position="192"/>
    </location>
</feature>
<feature type="active site" description="Nucleophile" evidence="1">
    <location>
        <position position="272"/>
    </location>
</feature>
<feature type="active site" evidence="1">
    <location>
        <position position="355"/>
    </location>
</feature>
<feature type="active site" evidence="1">
    <location>
        <position position="357"/>
    </location>
</feature>
<feature type="binding site" evidence="1">
    <location>
        <position position="51"/>
    </location>
    <ligand>
        <name>L-glutamine</name>
        <dbReference type="ChEBI" id="CHEBI:58359"/>
    </ligand>
</feature>
<feature type="binding site" evidence="1">
    <location>
        <position position="244"/>
    </location>
    <ligand>
        <name>L-glutamine</name>
        <dbReference type="ChEBI" id="CHEBI:58359"/>
    </ligand>
</feature>
<feature type="binding site" evidence="1">
    <location>
        <position position="246"/>
    </location>
    <ligand>
        <name>L-glutamine</name>
        <dbReference type="ChEBI" id="CHEBI:58359"/>
    </ligand>
</feature>
<feature type="binding site" evidence="1">
    <location>
        <position position="273"/>
    </location>
    <ligand>
        <name>L-glutamine</name>
        <dbReference type="ChEBI" id="CHEBI:58359"/>
    </ligand>
</feature>
<feature type="binding site" evidence="1">
    <location>
        <position position="276"/>
    </location>
    <ligand>
        <name>L-glutamine</name>
        <dbReference type="ChEBI" id="CHEBI:58359"/>
    </ligand>
</feature>
<feature type="binding site" evidence="1">
    <location>
        <position position="312"/>
    </location>
    <ligand>
        <name>L-glutamine</name>
        <dbReference type="ChEBI" id="CHEBI:58359"/>
    </ligand>
</feature>
<feature type="binding site" evidence="1">
    <location>
        <position position="314"/>
    </location>
    <ligand>
        <name>L-glutamine</name>
        <dbReference type="ChEBI" id="CHEBI:58359"/>
    </ligand>
</feature>
<feature type="binding site" evidence="1">
    <location>
        <position position="315"/>
    </location>
    <ligand>
        <name>L-glutamine</name>
        <dbReference type="ChEBI" id="CHEBI:58359"/>
    </ligand>
</feature>
<dbReference type="EC" id="6.3.5.5" evidence="1"/>
<dbReference type="EMBL" id="U38804">
    <property type="protein sequence ID" value="AAC08087.1"/>
    <property type="molecule type" value="Genomic_DNA"/>
</dbReference>
<dbReference type="PIR" id="S73122">
    <property type="entry name" value="S73122"/>
</dbReference>
<dbReference type="RefSeq" id="NP_053811.1">
    <property type="nucleotide sequence ID" value="NC_000925.1"/>
</dbReference>
<dbReference type="SMR" id="P51201"/>
<dbReference type="GeneID" id="809825"/>
<dbReference type="UniPathway" id="UPA00068">
    <property type="reaction ID" value="UER00171"/>
</dbReference>
<dbReference type="UniPathway" id="UPA00070">
    <property type="reaction ID" value="UER00115"/>
</dbReference>
<dbReference type="GO" id="GO:0009507">
    <property type="term" value="C:chloroplast"/>
    <property type="evidence" value="ECO:0007669"/>
    <property type="project" value="UniProtKB-SubCell"/>
</dbReference>
<dbReference type="GO" id="GO:0005524">
    <property type="term" value="F:ATP binding"/>
    <property type="evidence" value="ECO:0007669"/>
    <property type="project" value="UniProtKB-UniRule"/>
</dbReference>
<dbReference type="GO" id="GO:0004088">
    <property type="term" value="F:carbamoyl-phosphate synthase (glutamine-hydrolyzing) activity"/>
    <property type="evidence" value="ECO:0007669"/>
    <property type="project" value="UniProtKB-UniRule"/>
</dbReference>
<dbReference type="GO" id="GO:0004359">
    <property type="term" value="F:glutaminase activity"/>
    <property type="evidence" value="ECO:0007669"/>
    <property type="project" value="RHEA"/>
</dbReference>
<dbReference type="GO" id="GO:0006207">
    <property type="term" value="P:'de novo' pyrimidine nucleobase biosynthetic process"/>
    <property type="evidence" value="ECO:0007669"/>
    <property type="project" value="InterPro"/>
</dbReference>
<dbReference type="GO" id="GO:0044205">
    <property type="term" value="P:'de novo' UMP biosynthetic process"/>
    <property type="evidence" value="ECO:0007669"/>
    <property type="project" value="UniProtKB-UniRule"/>
</dbReference>
<dbReference type="GO" id="GO:0006541">
    <property type="term" value="P:glutamine metabolic process"/>
    <property type="evidence" value="ECO:0007669"/>
    <property type="project" value="InterPro"/>
</dbReference>
<dbReference type="GO" id="GO:0006526">
    <property type="term" value="P:L-arginine biosynthetic process"/>
    <property type="evidence" value="ECO:0007669"/>
    <property type="project" value="UniProtKB-UniRule"/>
</dbReference>
<dbReference type="CDD" id="cd01744">
    <property type="entry name" value="GATase1_CPSase"/>
    <property type="match status" value="1"/>
</dbReference>
<dbReference type="FunFam" id="3.50.30.20:FF:000001">
    <property type="entry name" value="Carbamoyl-phosphate synthase small chain"/>
    <property type="match status" value="1"/>
</dbReference>
<dbReference type="Gene3D" id="3.40.50.880">
    <property type="match status" value="1"/>
</dbReference>
<dbReference type="Gene3D" id="3.50.30.20">
    <property type="entry name" value="Carbamoyl-phosphate synthase small subunit, N-terminal domain"/>
    <property type="match status" value="1"/>
</dbReference>
<dbReference type="HAMAP" id="MF_01209">
    <property type="entry name" value="CPSase_S_chain"/>
    <property type="match status" value="1"/>
</dbReference>
<dbReference type="InterPro" id="IPR050472">
    <property type="entry name" value="Anth_synth/Amidotransfase"/>
</dbReference>
<dbReference type="InterPro" id="IPR006274">
    <property type="entry name" value="CarbamoylP_synth_ssu"/>
</dbReference>
<dbReference type="InterPro" id="IPR002474">
    <property type="entry name" value="CarbamoylP_synth_ssu_N"/>
</dbReference>
<dbReference type="InterPro" id="IPR036480">
    <property type="entry name" value="CarbP_synth_ssu_N_sf"/>
</dbReference>
<dbReference type="InterPro" id="IPR029062">
    <property type="entry name" value="Class_I_gatase-like"/>
</dbReference>
<dbReference type="InterPro" id="IPR035686">
    <property type="entry name" value="CPSase_GATase1"/>
</dbReference>
<dbReference type="InterPro" id="IPR017926">
    <property type="entry name" value="GATASE"/>
</dbReference>
<dbReference type="NCBIfam" id="TIGR01368">
    <property type="entry name" value="CPSaseIIsmall"/>
    <property type="match status" value="1"/>
</dbReference>
<dbReference type="NCBIfam" id="NF009475">
    <property type="entry name" value="PRK12838.1"/>
    <property type="match status" value="1"/>
</dbReference>
<dbReference type="PANTHER" id="PTHR43418:SF7">
    <property type="entry name" value="CARBAMOYL-PHOSPHATE SYNTHASE SMALL CHAIN"/>
    <property type="match status" value="1"/>
</dbReference>
<dbReference type="PANTHER" id="PTHR43418">
    <property type="entry name" value="MULTIFUNCTIONAL TRYPTOPHAN BIOSYNTHESIS PROTEIN-RELATED"/>
    <property type="match status" value="1"/>
</dbReference>
<dbReference type="Pfam" id="PF00988">
    <property type="entry name" value="CPSase_sm_chain"/>
    <property type="match status" value="1"/>
</dbReference>
<dbReference type="Pfam" id="PF00117">
    <property type="entry name" value="GATase"/>
    <property type="match status" value="1"/>
</dbReference>
<dbReference type="PRINTS" id="PR00097">
    <property type="entry name" value="ANTSNTHASEII"/>
</dbReference>
<dbReference type="PRINTS" id="PR00099">
    <property type="entry name" value="CPSGATASE"/>
</dbReference>
<dbReference type="PRINTS" id="PR00096">
    <property type="entry name" value="GATASE"/>
</dbReference>
<dbReference type="SMART" id="SM01097">
    <property type="entry name" value="CPSase_sm_chain"/>
    <property type="match status" value="1"/>
</dbReference>
<dbReference type="SUPFAM" id="SSF52021">
    <property type="entry name" value="Carbamoyl phosphate synthetase, small subunit N-terminal domain"/>
    <property type="match status" value="1"/>
</dbReference>
<dbReference type="SUPFAM" id="SSF52317">
    <property type="entry name" value="Class I glutamine amidotransferase-like"/>
    <property type="match status" value="1"/>
</dbReference>
<dbReference type="PROSITE" id="PS51273">
    <property type="entry name" value="GATASE_TYPE_1"/>
    <property type="match status" value="1"/>
</dbReference>
<sequence>MIKKIPAILVLEDGTYYKGWSFQADQSIVTIGEVVFNTGMTGYQEIITDPSYFQQIVTFTYPEIGNTGINSEDIESQTISIKGLVAKNICKISSSWRQQESLVQYLNRYKIPFIFGIDTRSLTQYLRRSGTMNGCISNKNLNHAYLQRKISEVPHMTGLDLIPNVTTNIMYDWDEKSLPSWYLADRNREKIYSQLKVIVIDFGVKLNILRRLATLGCQITVMPASTPTQDILSCKPDGILLSNGPGDPSAVNYGIKTVKELLNQNIPIFGICMGHQILNLALEAKTFKLKFGHRGINHPSGLKQQVEITSQNHGFAVDLQSVLKLSLQVTHFNLNDITVAGTGHSRSPYFSVQYHPESSPGPHDADYLFEYFIEIMKQFRKEAN</sequence>
<proteinExistence type="inferred from homology"/>
<accession>P51201</accession>
<organism>
    <name type="scientific">Porphyra purpurea</name>
    <name type="common">Red seaweed</name>
    <name type="synonym">Ulva purpurea</name>
    <dbReference type="NCBI Taxonomy" id="2787"/>
    <lineage>
        <taxon>Eukaryota</taxon>
        <taxon>Rhodophyta</taxon>
        <taxon>Bangiophyceae</taxon>
        <taxon>Bangiales</taxon>
        <taxon>Bangiaceae</taxon>
        <taxon>Porphyra</taxon>
    </lineage>
</organism>